<name>Y444_BORPA</name>
<accession>Q7WC84</accession>
<keyword id="KW-0677">Repeat</keyword>
<dbReference type="EMBL" id="BX640424">
    <property type="protein sequence ID" value="CAE36027.1"/>
    <property type="status" value="ALT_INIT"/>
    <property type="molecule type" value="Genomic_DNA"/>
</dbReference>
<dbReference type="RefSeq" id="WP_003807743.1">
    <property type="nucleotide sequence ID" value="NC_002928.3"/>
</dbReference>
<dbReference type="SMR" id="Q7WC84"/>
<dbReference type="KEGG" id="bpa:BPP0444"/>
<dbReference type="HOGENOM" id="CLU_163886_0_0_4"/>
<dbReference type="Proteomes" id="UP000001421">
    <property type="component" value="Chromosome"/>
</dbReference>
<dbReference type="Gene3D" id="2.30.29.80">
    <property type="match status" value="1"/>
</dbReference>
<dbReference type="InterPro" id="IPR010879">
    <property type="entry name" value="DUF1508"/>
</dbReference>
<dbReference type="InterPro" id="IPR051141">
    <property type="entry name" value="UPF0339_domain"/>
</dbReference>
<dbReference type="InterPro" id="IPR036913">
    <property type="entry name" value="YegP-like_sf"/>
</dbReference>
<dbReference type="PANTHER" id="PTHR40606">
    <property type="match status" value="1"/>
</dbReference>
<dbReference type="PANTHER" id="PTHR40606:SF1">
    <property type="entry name" value="UPF0339 PROTEIN YEGP"/>
    <property type="match status" value="1"/>
</dbReference>
<dbReference type="Pfam" id="PF07411">
    <property type="entry name" value="DUF1508"/>
    <property type="match status" value="2"/>
</dbReference>
<dbReference type="SUPFAM" id="SSF160113">
    <property type="entry name" value="YegP-like"/>
    <property type="match status" value="2"/>
</dbReference>
<comment type="similarity">
    <text evidence="2">Belongs to the UPF0339 family. Duplicated subfamily.</text>
</comment>
<comment type="sequence caution" evidence="2">
    <conflict type="erroneous initiation">
        <sequence resource="EMBL-CDS" id="CAE36027"/>
    </conflict>
</comment>
<feature type="chain" id="PRO_0000218132" description="UPF0339 protein BPP0444">
    <location>
        <begin position="1"/>
        <end position="111"/>
    </location>
</feature>
<feature type="repeat" description="1">
    <location>
        <begin position="9"/>
        <end position="57"/>
    </location>
</feature>
<feature type="repeat" description="2">
    <location>
        <begin position="60"/>
        <end position="108"/>
    </location>
</feature>
<feature type="region of interest" description="Disordered" evidence="1">
    <location>
        <begin position="86"/>
        <end position="111"/>
    </location>
</feature>
<protein>
    <recommendedName>
        <fullName>UPF0339 protein BPP0444</fullName>
    </recommendedName>
</protein>
<sequence>MSGYFVLKASGTQYMFNLHAGNHEIILTSERYTSKASAQDGIASVQKNAPDDARYQRLTAKDGSPYFSLTATNGQSIGRSEMYKTTQARDNGIASVKSNAPGAPTKDQTQA</sequence>
<organism>
    <name type="scientific">Bordetella parapertussis (strain 12822 / ATCC BAA-587 / NCTC 13253)</name>
    <dbReference type="NCBI Taxonomy" id="257311"/>
    <lineage>
        <taxon>Bacteria</taxon>
        <taxon>Pseudomonadati</taxon>
        <taxon>Pseudomonadota</taxon>
        <taxon>Betaproteobacteria</taxon>
        <taxon>Burkholderiales</taxon>
        <taxon>Alcaligenaceae</taxon>
        <taxon>Bordetella</taxon>
    </lineage>
</organism>
<reference key="1">
    <citation type="journal article" date="2003" name="Nat. Genet.">
        <title>Comparative analysis of the genome sequences of Bordetella pertussis, Bordetella parapertussis and Bordetella bronchiseptica.</title>
        <authorList>
            <person name="Parkhill J."/>
            <person name="Sebaihia M."/>
            <person name="Preston A."/>
            <person name="Murphy L.D."/>
            <person name="Thomson N.R."/>
            <person name="Harris D.E."/>
            <person name="Holden M.T.G."/>
            <person name="Churcher C.M."/>
            <person name="Bentley S.D."/>
            <person name="Mungall K.L."/>
            <person name="Cerdeno-Tarraga A.-M."/>
            <person name="Temple L."/>
            <person name="James K.D."/>
            <person name="Harris B."/>
            <person name="Quail M.A."/>
            <person name="Achtman M."/>
            <person name="Atkin R."/>
            <person name="Baker S."/>
            <person name="Basham D."/>
            <person name="Bason N."/>
            <person name="Cherevach I."/>
            <person name="Chillingworth T."/>
            <person name="Collins M."/>
            <person name="Cronin A."/>
            <person name="Davis P."/>
            <person name="Doggett J."/>
            <person name="Feltwell T."/>
            <person name="Goble A."/>
            <person name="Hamlin N."/>
            <person name="Hauser H."/>
            <person name="Holroyd S."/>
            <person name="Jagels K."/>
            <person name="Leather S."/>
            <person name="Moule S."/>
            <person name="Norberczak H."/>
            <person name="O'Neil S."/>
            <person name="Ormond D."/>
            <person name="Price C."/>
            <person name="Rabbinowitsch E."/>
            <person name="Rutter S."/>
            <person name="Sanders M."/>
            <person name="Saunders D."/>
            <person name="Seeger K."/>
            <person name="Sharp S."/>
            <person name="Simmonds M."/>
            <person name="Skelton J."/>
            <person name="Squares R."/>
            <person name="Squares S."/>
            <person name="Stevens K."/>
            <person name="Unwin L."/>
            <person name="Whitehead S."/>
            <person name="Barrell B.G."/>
            <person name="Maskell D.J."/>
        </authorList>
    </citation>
    <scope>NUCLEOTIDE SEQUENCE [LARGE SCALE GENOMIC DNA]</scope>
    <source>
        <strain>12822 / ATCC BAA-587 / NCTC 13253</strain>
    </source>
</reference>
<gene>
    <name type="ordered locus">BPP0444</name>
</gene>
<proteinExistence type="inferred from homology"/>
<evidence type="ECO:0000256" key="1">
    <source>
        <dbReference type="SAM" id="MobiDB-lite"/>
    </source>
</evidence>
<evidence type="ECO:0000305" key="2"/>